<feature type="signal peptide" evidence="1 6">
    <location>
        <begin position="1"/>
        <end position="31"/>
    </location>
</feature>
<feature type="chain" id="PRO_0000103731" description="Sphingomyelinase">
    <location>
        <begin position="32"/>
        <end position="490"/>
    </location>
</feature>
<feature type="topological domain" description="Periplasmic" evidence="5">
    <location>
        <begin position="32"/>
        <end position="136"/>
    </location>
</feature>
<feature type="transmembrane region" description="Beta stranded" evidence="1 6">
    <location>
        <begin position="137"/>
        <end position="145"/>
    </location>
</feature>
<feature type="topological domain" description="Extracellular" evidence="5">
    <location>
        <begin position="146"/>
        <end position="161"/>
    </location>
</feature>
<feature type="transmembrane region" description="Beta stranded" evidence="1 6">
    <location>
        <begin position="162"/>
        <end position="168"/>
    </location>
</feature>
<feature type="topological domain" description="Periplasmic" evidence="5">
    <location>
        <begin position="169"/>
        <end position="171"/>
    </location>
</feature>
<feature type="transmembrane region" description="Beta stranded" evidence="1 6">
    <location>
        <begin position="172"/>
        <end position="182"/>
    </location>
</feature>
<feature type="topological domain" description="Extracellular" evidence="5">
    <location>
        <begin position="183"/>
        <end position="187"/>
    </location>
</feature>
<feature type="transmembrane region" description="Beta stranded" evidence="1 6">
    <location>
        <begin position="188"/>
        <end position="196"/>
    </location>
</feature>
<feature type="topological domain" description="Periplasmic" evidence="5">
    <location>
        <begin position="197"/>
        <end position="204"/>
    </location>
</feature>
<feature type="transmembrane region" description="Beta stranded" evidence="1 6">
    <location>
        <begin position="205"/>
        <end position="213"/>
    </location>
</feature>
<feature type="topological domain" description="Extracellular" evidence="3">
    <location>
        <begin position="214"/>
        <end position="490"/>
    </location>
</feature>
<feature type="region of interest" description="Disordered" evidence="2">
    <location>
        <begin position="30"/>
        <end position="49"/>
    </location>
</feature>
<feature type="mutagenesis site" description="Loss of catalytic activity but still able to mediate uptake of glucose and phosphocholine; when associated with N-481." evidence="3">
    <original>H</original>
    <variation>N</variation>
    <location>
        <position position="353"/>
    </location>
</feature>
<feature type="mutagenesis site" description="Loss of catalytic activity but still able to mediate uptake of glucose and phosphocholine; when associated with N-353." evidence="3">
    <original>H</original>
    <variation>N</variation>
    <location>
        <position position="481"/>
    </location>
</feature>
<proteinExistence type="evidence at protein level"/>
<accession>P9WKQ1</accession>
<accession>L0T574</accession>
<accession>P64743</accession>
<accession>Q10549</accession>
<protein>
    <recommendedName>
        <fullName evidence="4">Sphingomyelinase</fullName>
        <shortName evidence="4">SMase</shortName>
        <ecNumber evidence="3">3.1.4.12</ecNumber>
    </recommendedName>
</protein>
<sequence length="490" mass="52034">MDYAKRIGQVGALAVVLGVGAAVTTHAIGSAAPTDPSSSSTDSPVDACSPLGGSASSLAAIPGASVPQVGVRQVDPGSIPDDLLNALIDFLAAVRNGLVPIIENRTPVANPQQVSVPEGGTVGPVRFDACDPDGNRMTFAVRERGAPGGPQHGIVTVDQRTASFIYTADPGFVGTDTFSVNVSDDTSLHVHGLAGYLGPFHGHDDVATVTVFVGNTPTDTISGDFSMLTYNIAGLPFPLSSAILPRFFYTKEIGKRLNAYYVANVQEDFAYHQFLIKKSKMPSQTPPEPPTLLWPIGVPFSDGLNTLSEFKVQRLDRQTWYECTSDNCLTLKGFTYSQMRLPGGDTVDVYNLHTNTGGGPTTNANLAQVANYIQQNSAGRAVIVTGDFNARYSDDQSALLQFAQVNGLTDAWVQVEHGPTTPPFAPTCMVGNECELLDKIFYRSGQGVTLQAVSYGNEAPKFFNSKGEPLSDHSPAVVGFHYVADNVAVR</sequence>
<dbReference type="EC" id="3.1.4.12" evidence="3"/>
<dbReference type="EMBL" id="AL123456">
    <property type="protein sequence ID" value="CCP43636.1"/>
    <property type="molecule type" value="Genomic_DNA"/>
</dbReference>
<dbReference type="PIR" id="E70781">
    <property type="entry name" value="E70781"/>
</dbReference>
<dbReference type="RefSeq" id="NP_215403.1">
    <property type="nucleotide sequence ID" value="NC_000962.3"/>
</dbReference>
<dbReference type="RefSeq" id="WP_003901038.1">
    <property type="nucleotide sequence ID" value="NZ_NVQJ01000001.1"/>
</dbReference>
<dbReference type="SMR" id="P9WKQ1"/>
<dbReference type="STRING" id="83332.Rv0888"/>
<dbReference type="TCDB" id="1.B.79.1.1">
    <property type="family name" value="the porin-sphingomyelinase fusion protein, spmt (spmt) family"/>
</dbReference>
<dbReference type="PaxDb" id="83332-Rv0888"/>
<dbReference type="DNASU" id="885210"/>
<dbReference type="GeneID" id="45424852"/>
<dbReference type="GeneID" id="885210"/>
<dbReference type="KEGG" id="mtu:Rv0888"/>
<dbReference type="KEGG" id="mtv:RVBD_0888"/>
<dbReference type="TubercuList" id="Rv0888"/>
<dbReference type="eggNOG" id="COG3021">
    <property type="taxonomic scope" value="Bacteria"/>
</dbReference>
<dbReference type="InParanoid" id="P9WKQ1"/>
<dbReference type="OrthoDB" id="9765195at2"/>
<dbReference type="SABIO-RK" id="P9WKQ1"/>
<dbReference type="PHI-base" id="PHI:6473"/>
<dbReference type="Proteomes" id="UP000001584">
    <property type="component" value="Chromosome"/>
</dbReference>
<dbReference type="GO" id="GO:0009279">
    <property type="term" value="C:cell outer membrane"/>
    <property type="evidence" value="ECO:0000314"/>
    <property type="project" value="UniProtKB"/>
</dbReference>
<dbReference type="GO" id="GO:0046930">
    <property type="term" value="C:pore complex"/>
    <property type="evidence" value="ECO:0007669"/>
    <property type="project" value="UniProtKB-KW"/>
</dbReference>
<dbReference type="GO" id="GO:0061751">
    <property type="term" value="F:neutral sphingomyelin phosphodiesterase activity"/>
    <property type="evidence" value="ECO:0000314"/>
    <property type="project" value="UniProtKB"/>
</dbReference>
<dbReference type="GO" id="GO:0015288">
    <property type="term" value="F:porin activity"/>
    <property type="evidence" value="ECO:0007669"/>
    <property type="project" value="UniProtKB-KW"/>
</dbReference>
<dbReference type="GO" id="GO:0022857">
    <property type="term" value="F:transmembrane transporter activity"/>
    <property type="evidence" value="ECO:0000314"/>
    <property type="project" value="UniProtKB"/>
</dbReference>
<dbReference type="GO" id="GO:0044002">
    <property type="term" value="P:acquisition of nutrients from host"/>
    <property type="evidence" value="ECO:0000314"/>
    <property type="project" value="UniProtKB"/>
</dbReference>
<dbReference type="GO" id="GO:0044179">
    <property type="term" value="P:hemolysis in another organism"/>
    <property type="evidence" value="ECO:0000315"/>
    <property type="project" value="UniProtKB"/>
</dbReference>
<dbReference type="GO" id="GO:0006811">
    <property type="term" value="P:monoatomic ion transport"/>
    <property type="evidence" value="ECO:0007669"/>
    <property type="project" value="UniProtKB-KW"/>
</dbReference>
<dbReference type="GO" id="GO:0006685">
    <property type="term" value="P:sphingomyelin catabolic process"/>
    <property type="evidence" value="ECO:0000314"/>
    <property type="project" value="UniProtKB"/>
</dbReference>
<dbReference type="GO" id="GO:0055085">
    <property type="term" value="P:transmembrane transport"/>
    <property type="evidence" value="ECO:0000314"/>
    <property type="project" value="UniProtKB"/>
</dbReference>
<dbReference type="Gene3D" id="2.60.40.3440">
    <property type="match status" value="1"/>
</dbReference>
<dbReference type="Gene3D" id="3.60.10.10">
    <property type="entry name" value="Endonuclease/exonuclease/phosphatase"/>
    <property type="match status" value="1"/>
</dbReference>
<dbReference type="InterPro" id="IPR036691">
    <property type="entry name" value="Endo/exonu/phosph_ase_sf"/>
</dbReference>
<dbReference type="InterPro" id="IPR005135">
    <property type="entry name" value="Endo/exonuclease/phosphatase"/>
</dbReference>
<dbReference type="Pfam" id="PF17963">
    <property type="entry name" value="Big_9"/>
    <property type="match status" value="1"/>
</dbReference>
<dbReference type="Pfam" id="PF03372">
    <property type="entry name" value="Exo_endo_phos"/>
    <property type="match status" value="1"/>
</dbReference>
<dbReference type="SUPFAM" id="SSF56219">
    <property type="entry name" value="DNase I-like"/>
    <property type="match status" value="1"/>
</dbReference>
<name>SMASE_MYCTU</name>
<gene>
    <name evidence="4" type="primary">spmT</name>
    <name type="ordered locus">Rv0888</name>
    <name type="ORF">MTCY31.16</name>
</gene>
<reference key="1">
    <citation type="journal article" date="1998" name="Nature">
        <title>Deciphering the biology of Mycobacterium tuberculosis from the complete genome sequence.</title>
        <authorList>
            <person name="Cole S.T."/>
            <person name="Brosch R."/>
            <person name="Parkhill J."/>
            <person name="Garnier T."/>
            <person name="Churcher C.M."/>
            <person name="Harris D.E."/>
            <person name="Gordon S.V."/>
            <person name="Eiglmeier K."/>
            <person name="Gas S."/>
            <person name="Barry C.E. III"/>
            <person name="Tekaia F."/>
            <person name="Badcock K."/>
            <person name="Basham D."/>
            <person name="Brown D."/>
            <person name="Chillingworth T."/>
            <person name="Connor R."/>
            <person name="Davies R.M."/>
            <person name="Devlin K."/>
            <person name="Feltwell T."/>
            <person name="Gentles S."/>
            <person name="Hamlin N."/>
            <person name="Holroyd S."/>
            <person name="Hornsby T."/>
            <person name="Jagels K."/>
            <person name="Krogh A."/>
            <person name="McLean J."/>
            <person name="Moule S."/>
            <person name="Murphy L.D."/>
            <person name="Oliver S."/>
            <person name="Osborne J."/>
            <person name="Quail M.A."/>
            <person name="Rajandream M.A."/>
            <person name="Rogers J."/>
            <person name="Rutter S."/>
            <person name="Seeger K."/>
            <person name="Skelton S."/>
            <person name="Squares S."/>
            <person name="Squares R."/>
            <person name="Sulston J.E."/>
            <person name="Taylor K."/>
            <person name="Whitehead S."/>
            <person name="Barrell B.G."/>
        </authorList>
    </citation>
    <scope>NUCLEOTIDE SEQUENCE [LARGE SCALE GENOMIC DNA]</scope>
    <source>
        <strain>ATCC 25618 / H37Rv</strain>
    </source>
</reference>
<reference key="2">
    <citation type="journal article" date="2011" name="Mol. Cell. Proteomics">
        <title>Proteogenomic analysis of Mycobacterium tuberculosis by high resolution mass spectrometry.</title>
        <authorList>
            <person name="Kelkar D.S."/>
            <person name="Kumar D."/>
            <person name="Kumar P."/>
            <person name="Balakrishnan L."/>
            <person name="Muthusamy B."/>
            <person name="Yadav A.K."/>
            <person name="Shrivastava P."/>
            <person name="Marimuthu A."/>
            <person name="Anand S."/>
            <person name="Sundaram H."/>
            <person name="Kingsbury R."/>
            <person name="Harsha H.C."/>
            <person name="Nair B."/>
            <person name="Prasad T.S."/>
            <person name="Chauhan D.S."/>
            <person name="Katoch K."/>
            <person name="Katoch V.M."/>
            <person name="Kumar P."/>
            <person name="Chaerkady R."/>
            <person name="Ramachandran S."/>
            <person name="Dash D."/>
            <person name="Pandey A."/>
        </authorList>
    </citation>
    <scope>IDENTIFICATION BY MASS SPECTROMETRY [LARGE SCALE ANALYSIS]</scope>
    <source>
        <strain>ATCC 25618 / H37Rv</strain>
    </source>
</reference>
<reference key="3">
    <citation type="journal article" date="2015" name="Mol. Microbiol.">
        <title>Surface hydrolysis of sphingomyelin by the outer membrane protein Rv0888 supports replication of Mycobacterium tuberculosis in macrophages.</title>
        <authorList>
            <person name="Speer A."/>
            <person name="Sun J."/>
            <person name="Danilchanka O."/>
            <person name="Meikle V."/>
            <person name="Rowland J.L."/>
            <person name="Walter K."/>
            <person name="Buck B.R."/>
            <person name="Pavlenok M."/>
            <person name="Hoelscher C."/>
            <person name="Ehrt S."/>
            <person name="Niederweis M."/>
        </authorList>
    </citation>
    <scope>FUNCTION</scope>
    <scope>CATALYTIC ACTIVITY</scope>
    <scope>BIOPHYSICOCHEMICAL PROPERTIES</scope>
    <scope>SUBCELLULAR LOCATION</scope>
    <scope>DOMAIN</scope>
    <scope>INDUCTION</scope>
    <scope>3D-STRUCTURE MODELING</scope>
    <scope>DISRUPTION PHENOTYPE</scope>
    <scope>MUTAGENESIS OF HIS-353 AND HIS-481</scope>
    <source>
        <strain>ATCC 25618 / H37Rv</strain>
    </source>
</reference>
<keyword id="KW-0998">Cell outer membrane</keyword>
<keyword id="KW-0204">Cytolysis</keyword>
<keyword id="KW-0354">Hemolysis</keyword>
<keyword id="KW-0378">Hydrolase</keyword>
<keyword id="KW-0406">Ion transport</keyword>
<keyword id="KW-0442">Lipid degradation</keyword>
<keyword id="KW-0443">Lipid metabolism</keyword>
<keyword id="KW-0472">Membrane</keyword>
<keyword id="KW-0626">Porin</keyword>
<keyword id="KW-1185">Reference proteome</keyword>
<keyword id="KW-0732">Signal</keyword>
<keyword id="KW-0812">Transmembrane</keyword>
<keyword id="KW-1134">Transmembrane beta strand</keyword>
<keyword id="KW-0813">Transport</keyword>
<evidence type="ECO:0000255" key="1"/>
<evidence type="ECO:0000256" key="2">
    <source>
        <dbReference type="SAM" id="MobiDB-lite"/>
    </source>
</evidence>
<evidence type="ECO:0000269" key="3">
    <source>
    </source>
</evidence>
<evidence type="ECO:0000303" key="4">
    <source>
    </source>
</evidence>
<evidence type="ECO:0000305" key="5"/>
<evidence type="ECO:0000305" key="6">
    <source>
    </source>
</evidence>
<comment type="function">
    <text evidence="3">Catalyzes the cleavage of sphingomyelin, a major lipid in eukaryotic cells, into ceramide and phosphocholine, which are then utilized by M.tuberculosis as carbon, nitrogen and phosphorus sources, respectively. Thus, enables M.tuberculosis to utilize sphingomyelin as a source of several essential nutrients for intracellular growth during infection. Furthermore, lyses erythrocytes and constitutes the main hemolytic factor of M.tuberculosis.</text>
</comment>
<comment type="catalytic activity">
    <reaction evidence="3">
        <text>a sphingomyelin + H2O = phosphocholine + an N-acylsphing-4-enine + H(+)</text>
        <dbReference type="Rhea" id="RHEA:19253"/>
        <dbReference type="ChEBI" id="CHEBI:15377"/>
        <dbReference type="ChEBI" id="CHEBI:15378"/>
        <dbReference type="ChEBI" id="CHEBI:17636"/>
        <dbReference type="ChEBI" id="CHEBI:52639"/>
        <dbReference type="ChEBI" id="CHEBI:295975"/>
        <dbReference type="EC" id="3.1.4.12"/>
    </reaction>
</comment>
<comment type="biophysicochemical properties">
    <kinetics>
        <KM evidence="3">671 uM for sphingomyelin</KM>
        <text evidence="3">kcat is 1797 sec(-1).</text>
    </kinetics>
    <phDependence>
        <text evidence="3">Is most active at neutral pH.</text>
    </phDependence>
</comment>
<comment type="subcellular location">
    <subcellularLocation>
        <location evidence="3">Cell outer membrane</location>
        <topology evidence="6">Multi-pass membrane protein</topology>
    </subcellularLocation>
</comment>
<comment type="induction">
    <text evidence="3">Rv0888 protein levels are increased by 5-fold after contact with erythrocytes for 24 hours, and by 100-fold in the presence of sphingomyelin as the sole carbon source.</text>
</comment>
<comment type="domain">
    <text evidence="6">Consists of a surface-exposed C-terminal sphingomyelinase domain and a putative outer membrane-spanning N-terminal channel domain able to mediate glucose and phosphocholine uptake across the outer membrane.</text>
</comment>
<comment type="disruption phenotype">
    <text evidence="3">Cells lacking this gene do not grow on sphingomyelin as a sole carbon source anymore and replicate poorly in macrophages indicating that M.tuberculosis utilizes sphingomyelin during infection. Moreover, deletion of this gene reduces lysis of erythrocytes by twofold compared with wild-type.</text>
</comment>
<comment type="similarity">
    <text evidence="5">Belongs to the SpmT family.</text>
</comment>
<organism>
    <name type="scientific">Mycobacterium tuberculosis (strain ATCC 25618 / H37Rv)</name>
    <dbReference type="NCBI Taxonomy" id="83332"/>
    <lineage>
        <taxon>Bacteria</taxon>
        <taxon>Bacillati</taxon>
        <taxon>Actinomycetota</taxon>
        <taxon>Actinomycetes</taxon>
        <taxon>Mycobacteriales</taxon>
        <taxon>Mycobacteriaceae</taxon>
        <taxon>Mycobacterium</taxon>
        <taxon>Mycobacterium tuberculosis complex</taxon>
    </lineage>
</organism>